<reference key="1">
    <citation type="journal article" date="2001" name="Nature">
        <title>Genome sequence of Yersinia pestis, the causative agent of plague.</title>
        <authorList>
            <person name="Parkhill J."/>
            <person name="Wren B.W."/>
            <person name="Thomson N.R."/>
            <person name="Titball R.W."/>
            <person name="Holden M.T.G."/>
            <person name="Prentice M.B."/>
            <person name="Sebaihia M."/>
            <person name="James K.D."/>
            <person name="Churcher C.M."/>
            <person name="Mungall K.L."/>
            <person name="Baker S."/>
            <person name="Basham D."/>
            <person name="Bentley S.D."/>
            <person name="Brooks K."/>
            <person name="Cerdeno-Tarraga A.-M."/>
            <person name="Chillingworth T."/>
            <person name="Cronin A."/>
            <person name="Davies R.M."/>
            <person name="Davis P."/>
            <person name="Dougan G."/>
            <person name="Feltwell T."/>
            <person name="Hamlin N."/>
            <person name="Holroyd S."/>
            <person name="Jagels K."/>
            <person name="Karlyshev A.V."/>
            <person name="Leather S."/>
            <person name="Moule S."/>
            <person name="Oyston P.C.F."/>
            <person name="Quail M.A."/>
            <person name="Rutherford K.M."/>
            <person name="Simmonds M."/>
            <person name="Skelton J."/>
            <person name="Stevens K."/>
            <person name="Whitehead S."/>
            <person name="Barrell B.G."/>
        </authorList>
    </citation>
    <scope>NUCLEOTIDE SEQUENCE [LARGE SCALE GENOMIC DNA]</scope>
    <source>
        <strain>CO-92 / Biovar Orientalis</strain>
    </source>
</reference>
<reference key="2">
    <citation type="journal article" date="2002" name="J. Bacteriol.">
        <title>Genome sequence of Yersinia pestis KIM.</title>
        <authorList>
            <person name="Deng W."/>
            <person name="Burland V."/>
            <person name="Plunkett G. III"/>
            <person name="Boutin A."/>
            <person name="Mayhew G.F."/>
            <person name="Liss P."/>
            <person name="Perna N.T."/>
            <person name="Rose D.J."/>
            <person name="Mau B."/>
            <person name="Zhou S."/>
            <person name="Schwartz D.C."/>
            <person name="Fetherston J.D."/>
            <person name="Lindler L.E."/>
            <person name="Brubaker R.R."/>
            <person name="Plano G.V."/>
            <person name="Straley S.C."/>
            <person name="McDonough K.A."/>
            <person name="Nilles M.L."/>
            <person name="Matson J.S."/>
            <person name="Blattner F.R."/>
            <person name="Perry R.D."/>
        </authorList>
    </citation>
    <scope>NUCLEOTIDE SEQUENCE [LARGE SCALE GENOMIC DNA]</scope>
    <source>
        <strain>KIM10+ / Biovar Mediaevalis</strain>
    </source>
</reference>
<reference key="3">
    <citation type="journal article" date="2004" name="DNA Res.">
        <title>Complete genome sequence of Yersinia pestis strain 91001, an isolate avirulent to humans.</title>
        <authorList>
            <person name="Song Y."/>
            <person name="Tong Z."/>
            <person name="Wang J."/>
            <person name="Wang L."/>
            <person name="Guo Z."/>
            <person name="Han Y."/>
            <person name="Zhang J."/>
            <person name="Pei D."/>
            <person name="Zhou D."/>
            <person name="Qin H."/>
            <person name="Pang X."/>
            <person name="Han Y."/>
            <person name="Zhai J."/>
            <person name="Li M."/>
            <person name="Cui B."/>
            <person name="Qi Z."/>
            <person name="Jin L."/>
            <person name="Dai R."/>
            <person name="Chen F."/>
            <person name="Li S."/>
            <person name="Ye C."/>
            <person name="Du Z."/>
            <person name="Lin W."/>
            <person name="Wang J."/>
            <person name="Yu J."/>
            <person name="Yang H."/>
            <person name="Wang J."/>
            <person name="Huang P."/>
            <person name="Yang R."/>
        </authorList>
    </citation>
    <scope>NUCLEOTIDE SEQUENCE [LARGE SCALE GENOMIC DNA]</scope>
    <source>
        <strain>91001 / Biovar Mediaevalis</strain>
    </source>
</reference>
<proteinExistence type="inferred from homology"/>
<comment type="function">
    <text evidence="1">Necessary for efficient RNA polymerase transcription elongation past template-encoded arresting sites. The arresting sites in DNA have the property of trapping a certain fraction of elongating RNA polymerases that pass through, resulting in locked ternary complexes. Cleavage of the nascent transcript by cleavage factors such as GreA or GreB allows the resumption of elongation from the new 3'terminus. GreB releases sequences of up to 9 nucleotides in length.</text>
</comment>
<comment type="similarity">
    <text evidence="1">Belongs to the GreA/GreB family. GreB subfamily.</text>
</comment>
<dbReference type="EMBL" id="AL590842">
    <property type="protein sequence ID" value="CAL18821.1"/>
    <property type="molecule type" value="Genomic_DNA"/>
</dbReference>
<dbReference type="EMBL" id="AE009952">
    <property type="protein sequence ID" value="AAM87459.1"/>
    <property type="molecule type" value="Genomic_DNA"/>
</dbReference>
<dbReference type="EMBL" id="AE017042">
    <property type="protein sequence ID" value="AAS60414.1"/>
    <property type="molecule type" value="Genomic_DNA"/>
</dbReference>
<dbReference type="PIR" id="AD0017">
    <property type="entry name" value="AD0017"/>
</dbReference>
<dbReference type="RefSeq" id="WP_002208915.1">
    <property type="nucleotide sequence ID" value="NZ_WUCM01000004.1"/>
</dbReference>
<dbReference type="RefSeq" id="YP_002345221.1">
    <property type="nucleotide sequence ID" value="NC_003143.1"/>
</dbReference>
<dbReference type="SMR" id="Q8ZJH2"/>
<dbReference type="STRING" id="214092.YPO0135"/>
<dbReference type="PaxDb" id="214092-YPO0135"/>
<dbReference type="DNASU" id="1148862"/>
<dbReference type="EnsemblBacteria" id="AAS60414">
    <property type="protein sequence ID" value="AAS60414"/>
    <property type="gene ID" value="YP_0136"/>
</dbReference>
<dbReference type="GeneID" id="57974465"/>
<dbReference type="KEGG" id="ype:YPO0135"/>
<dbReference type="KEGG" id="ypk:y3915"/>
<dbReference type="KEGG" id="ypm:YP_0136"/>
<dbReference type="PATRIC" id="fig|1028802.3.peg.401"/>
<dbReference type="eggNOG" id="COG0782">
    <property type="taxonomic scope" value="Bacteria"/>
</dbReference>
<dbReference type="HOGENOM" id="CLU_101379_3_0_6"/>
<dbReference type="OMA" id="DEIYGRN"/>
<dbReference type="OrthoDB" id="5511940at2"/>
<dbReference type="Proteomes" id="UP000000815">
    <property type="component" value="Chromosome"/>
</dbReference>
<dbReference type="Proteomes" id="UP000001019">
    <property type="component" value="Chromosome"/>
</dbReference>
<dbReference type="Proteomes" id="UP000002490">
    <property type="component" value="Chromosome"/>
</dbReference>
<dbReference type="GO" id="GO:0003677">
    <property type="term" value="F:DNA binding"/>
    <property type="evidence" value="ECO:0007669"/>
    <property type="project" value="UniProtKB-UniRule"/>
</dbReference>
<dbReference type="GO" id="GO:0070063">
    <property type="term" value="F:RNA polymerase binding"/>
    <property type="evidence" value="ECO:0007669"/>
    <property type="project" value="InterPro"/>
</dbReference>
<dbReference type="GO" id="GO:0006354">
    <property type="term" value="P:DNA-templated transcription elongation"/>
    <property type="evidence" value="ECO:0000318"/>
    <property type="project" value="GO_Central"/>
</dbReference>
<dbReference type="GO" id="GO:0032784">
    <property type="term" value="P:regulation of DNA-templated transcription elongation"/>
    <property type="evidence" value="ECO:0007669"/>
    <property type="project" value="UniProtKB-UniRule"/>
</dbReference>
<dbReference type="FunFam" id="1.10.287.180:FF:000001">
    <property type="entry name" value="Transcription elongation factor GreA"/>
    <property type="match status" value="1"/>
</dbReference>
<dbReference type="FunFam" id="3.10.50.30:FF:000001">
    <property type="entry name" value="Transcription elongation factor GreA"/>
    <property type="match status" value="1"/>
</dbReference>
<dbReference type="Gene3D" id="3.10.50.30">
    <property type="entry name" value="Transcription elongation factor, GreA/GreB, C-terminal domain"/>
    <property type="match status" value="1"/>
</dbReference>
<dbReference type="Gene3D" id="1.10.287.180">
    <property type="entry name" value="Transcription elongation factor, GreA/GreB, N-terminal domain"/>
    <property type="match status" value="1"/>
</dbReference>
<dbReference type="HAMAP" id="MF_00105">
    <property type="entry name" value="GreA_GreB"/>
    <property type="match status" value="1"/>
</dbReference>
<dbReference type="HAMAP" id="MF_00930">
    <property type="entry name" value="GreB"/>
    <property type="match status" value="1"/>
</dbReference>
<dbReference type="InterPro" id="IPR036953">
    <property type="entry name" value="GreA/GreB_C_sf"/>
</dbReference>
<dbReference type="InterPro" id="IPR018151">
    <property type="entry name" value="TF_GreA/GreB_CS"/>
</dbReference>
<dbReference type="InterPro" id="IPR028624">
    <property type="entry name" value="Tscrpt_elong_fac_GreA/B"/>
</dbReference>
<dbReference type="InterPro" id="IPR001437">
    <property type="entry name" value="Tscrpt_elong_fac_GreA/B_C"/>
</dbReference>
<dbReference type="InterPro" id="IPR023459">
    <property type="entry name" value="Tscrpt_elong_fac_GreA/B_fam"/>
</dbReference>
<dbReference type="InterPro" id="IPR022691">
    <property type="entry name" value="Tscrpt_elong_fac_GreA/B_N"/>
</dbReference>
<dbReference type="InterPro" id="IPR036805">
    <property type="entry name" value="Tscrpt_elong_fac_GreA/B_N_sf"/>
</dbReference>
<dbReference type="InterPro" id="IPR006358">
    <property type="entry name" value="Tscrpt_elong_fac_GreB"/>
</dbReference>
<dbReference type="NCBIfam" id="TIGR01461">
    <property type="entry name" value="greB"/>
    <property type="match status" value="1"/>
</dbReference>
<dbReference type="NCBIfam" id="NF002506">
    <property type="entry name" value="PRK01885.1"/>
    <property type="match status" value="1"/>
</dbReference>
<dbReference type="PANTHER" id="PTHR30437">
    <property type="entry name" value="TRANSCRIPTION ELONGATION FACTOR GREA"/>
    <property type="match status" value="1"/>
</dbReference>
<dbReference type="PANTHER" id="PTHR30437:SF6">
    <property type="entry name" value="TRANSCRIPTION ELONGATION FACTOR GREB"/>
    <property type="match status" value="1"/>
</dbReference>
<dbReference type="Pfam" id="PF01272">
    <property type="entry name" value="GreA_GreB"/>
    <property type="match status" value="1"/>
</dbReference>
<dbReference type="Pfam" id="PF03449">
    <property type="entry name" value="GreA_GreB_N"/>
    <property type="match status" value="1"/>
</dbReference>
<dbReference type="PIRSF" id="PIRSF006092">
    <property type="entry name" value="GreA_GreB"/>
    <property type="match status" value="1"/>
</dbReference>
<dbReference type="SUPFAM" id="SSF54534">
    <property type="entry name" value="FKBP-like"/>
    <property type="match status" value="1"/>
</dbReference>
<dbReference type="SUPFAM" id="SSF46557">
    <property type="entry name" value="GreA transcript cleavage protein, N-terminal domain"/>
    <property type="match status" value="1"/>
</dbReference>
<dbReference type="PROSITE" id="PS00829">
    <property type="entry name" value="GREAB_1"/>
    <property type="match status" value="1"/>
</dbReference>
<dbReference type="PROSITE" id="PS00830">
    <property type="entry name" value="GREAB_2"/>
    <property type="match status" value="1"/>
</dbReference>
<organism>
    <name type="scientific">Yersinia pestis</name>
    <dbReference type="NCBI Taxonomy" id="632"/>
    <lineage>
        <taxon>Bacteria</taxon>
        <taxon>Pseudomonadati</taxon>
        <taxon>Pseudomonadota</taxon>
        <taxon>Gammaproteobacteria</taxon>
        <taxon>Enterobacterales</taxon>
        <taxon>Yersiniaceae</taxon>
        <taxon>Yersinia</taxon>
    </lineage>
</organism>
<sequence length="171" mass="20214">MAKSNYITREGWQALDRELHYLWREERPVVTQAVSEAAAMGDRSENAEYIYGKKRLREIDRRVRFLAKRLEVLKIVDPDPRQEGKVFFGAWVRVENEQEEQRIFRLVGPDEFDPAKKWISIDSPVARALIGKQVDDEVTVQTPNGEATYWILEIRYRPFDEDRPFNEDIDN</sequence>
<keyword id="KW-0175">Coiled coil</keyword>
<keyword id="KW-0238">DNA-binding</keyword>
<keyword id="KW-1185">Reference proteome</keyword>
<keyword id="KW-0804">Transcription</keyword>
<keyword id="KW-0805">Transcription regulation</keyword>
<name>GREB_YERPE</name>
<feature type="chain" id="PRO_0000177004" description="Transcription elongation factor GreB">
    <location>
        <begin position="1"/>
        <end position="171"/>
    </location>
</feature>
<feature type="coiled-coil region" evidence="1">
    <location>
        <begin position="53"/>
        <end position="75"/>
    </location>
</feature>
<evidence type="ECO:0000255" key="1">
    <source>
        <dbReference type="HAMAP-Rule" id="MF_00930"/>
    </source>
</evidence>
<gene>
    <name evidence="1" type="primary">greB</name>
    <name type="ordered locus">YPO0135</name>
    <name type="ordered locus">y3915</name>
    <name type="ordered locus">YP_0136</name>
</gene>
<accession>Q8ZJH2</accession>
<accession>Q0WKG7</accession>
<protein>
    <recommendedName>
        <fullName evidence="1">Transcription elongation factor GreB</fullName>
    </recommendedName>
    <alternativeName>
        <fullName evidence="1">Transcript cleavage factor GreB</fullName>
    </alternativeName>
</protein>